<reference key="1">
    <citation type="journal article" date="2003" name="Genome Res.">
        <title>Comparative genome analysis of Vibrio vulnificus, a marine pathogen.</title>
        <authorList>
            <person name="Chen C.-Y."/>
            <person name="Wu K.-M."/>
            <person name="Chang Y.-C."/>
            <person name="Chang C.-H."/>
            <person name="Tsai H.-C."/>
            <person name="Liao T.-L."/>
            <person name="Liu Y.-M."/>
            <person name="Chen H.-J."/>
            <person name="Shen A.B.-T."/>
            <person name="Li J.-C."/>
            <person name="Su T.-L."/>
            <person name="Shao C.-P."/>
            <person name="Lee C.-T."/>
            <person name="Hor L.-I."/>
            <person name="Tsai S.-F."/>
        </authorList>
    </citation>
    <scope>NUCLEOTIDE SEQUENCE [LARGE SCALE GENOMIC DNA]</scope>
    <source>
        <strain>YJ016</strain>
    </source>
</reference>
<sequence length="207" mass="23449">MGKGTLYIVSAPSGAGKSSLISAMLEKNPTYAMKVSVSHTTRGMRPGEQDGVHYHFVEKEHFEDLITKGEFLEYAEVFGNYYGTSRVWIENTLDKGIDVFLDIDWQGARQIREQMPHAKSIFILPPSNGELERRLNTRGQDSEAVIAKRMAEAKSEISHYNEYDYVIINDDFDTALMDFKAIIRAERLKQDKQAAKYSGMLDALLAE</sequence>
<gene>
    <name evidence="1" type="primary">gmk</name>
    <name type="ordered locus">VV0243</name>
</gene>
<evidence type="ECO:0000255" key="1">
    <source>
        <dbReference type="HAMAP-Rule" id="MF_00328"/>
    </source>
</evidence>
<organism>
    <name type="scientific">Vibrio vulnificus (strain YJ016)</name>
    <dbReference type="NCBI Taxonomy" id="196600"/>
    <lineage>
        <taxon>Bacteria</taxon>
        <taxon>Pseudomonadati</taxon>
        <taxon>Pseudomonadota</taxon>
        <taxon>Gammaproteobacteria</taxon>
        <taxon>Vibrionales</taxon>
        <taxon>Vibrionaceae</taxon>
        <taxon>Vibrio</taxon>
    </lineage>
</organism>
<keyword id="KW-0067">ATP-binding</keyword>
<keyword id="KW-0963">Cytoplasm</keyword>
<keyword id="KW-0418">Kinase</keyword>
<keyword id="KW-0547">Nucleotide-binding</keyword>
<keyword id="KW-0808">Transferase</keyword>
<protein>
    <recommendedName>
        <fullName evidence="1">Guanylate kinase</fullName>
        <ecNumber evidence="1">2.7.4.8</ecNumber>
    </recommendedName>
    <alternativeName>
        <fullName evidence="1">GMP kinase</fullName>
    </alternativeName>
</protein>
<dbReference type="EC" id="2.7.4.8" evidence="1"/>
<dbReference type="EMBL" id="BA000037">
    <property type="protein sequence ID" value="BAC93007.1"/>
    <property type="molecule type" value="Genomic_DNA"/>
</dbReference>
<dbReference type="RefSeq" id="WP_011078918.1">
    <property type="nucleotide sequence ID" value="NC_005139.1"/>
</dbReference>
<dbReference type="SMR" id="Q7MPW9"/>
<dbReference type="STRING" id="672.VV93_v1c02220"/>
<dbReference type="GeneID" id="93895149"/>
<dbReference type="KEGG" id="vvy:VV0243"/>
<dbReference type="eggNOG" id="COG0194">
    <property type="taxonomic scope" value="Bacteria"/>
</dbReference>
<dbReference type="HOGENOM" id="CLU_001715_1_0_6"/>
<dbReference type="Proteomes" id="UP000002675">
    <property type="component" value="Chromosome I"/>
</dbReference>
<dbReference type="GO" id="GO:0005829">
    <property type="term" value="C:cytosol"/>
    <property type="evidence" value="ECO:0007669"/>
    <property type="project" value="TreeGrafter"/>
</dbReference>
<dbReference type="GO" id="GO:0005524">
    <property type="term" value="F:ATP binding"/>
    <property type="evidence" value="ECO:0007669"/>
    <property type="project" value="UniProtKB-UniRule"/>
</dbReference>
<dbReference type="GO" id="GO:0004385">
    <property type="term" value="F:guanylate kinase activity"/>
    <property type="evidence" value="ECO:0007669"/>
    <property type="project" value="UniProtKB-UniRule"/>
</dbReference>
<dbReference type="CDD" id="cd00071">
    <property type="entry name" value="GMPK"/>
    <property type="match status" value="1"/>
</dbReference>
<dbReference type="FunFam" id="3.40.50.300:FF:000855">
    <property type="entry name" value="Guanylate kinase"/>
    <property type="match status" value="1"/>
</dbReference>
<dbReference type="FunFam" id="3.30.63.10:FF:000002">
    <property type="entry name" value="Guanylate kinase 1"/>
    <property type="match status" value="1"/>
</dbReference>
<dbReference type="Gene3D" id="3.30.63.10">
    <property type="entry name" value="Guanylate Kinase phosphate binding domain"/>
    <property type="match status" value="1"/>
</dbReference>
<dbReference type="Gene3D" id="3.40.50.300">
    <property type="entry name" value="P-loop containing nucleotide triphosphate hydrolases"/>
    <property type="match status" value="1"/>
</dbReference>
<dbReference type="HAMAP" id="MF_00328">
    <property type="entry name" value="Guanylate_kinase"/>
    <property type="match status" value="1"/>
</dbReference>
<dbReference type="InterPro" id="IPR008145">
    <property type="entry name" value="GK/Ca_channel_bsu"/>
</dbReference>
<dbReference type="InterPro" id="IPR008144">
    <property type="entry name" value="Guanylate_kin-like_dom"/>
</dbReference>
<dbReference type="InterPro" id="IPR017665">
    <property type="entry name" value="Guanylate_kinase"/>
</dbReference>
<dbReference type="InterPro" id="IPR020590">
    <property type="entry name" value="Guanylate_kinase_CS"/>
</dbReference>
<dbReference type="InterPro" id="IPR027417">
    <property type="entry name" value="P-loop_NTPase"/>
</dbReference>
<dbReference type="NCBIfam" id="TIGR03263">
    <property type="entry name" value="guanyl_kin"/>
    <property type="match status" value="1"/>
</dbReference>
<dbReference type="PANTHER" id="PTHR23117:SF13">
    <property type="entry name" value="GUANYLATE KINASE"/>
    <property type="match status" value="1"/>
</dbReference>
<dbReference type="PANTHER" id="PTHR23117">
    <property type="entry name" value="GUANYLATE KINASE-RELATED"/>
    <property type="match status" value="1"/>
</dbReference>
<dbReference type="Pfam" id="PF00625">
    <property type="entry name" value="Guanylate_kin"/>
    <property type="match status" value="1"/>
</dbReference>
<dbReference type="SMART" id="SM00072">
    <property type="entry name" value="GuKc"/>
    <property type="match status" value="1"/>
</dbReference>
<dbReference type="SUPFAM" id="SSF52540">
    <property type="entry name" value="P-loop containing nucleoside triphosphate hydrolases"/>
    <property type="match status" value="1"/>
</dbReference>
<dbReference type="PROSITE" id="PS00856">
    <property type="entry name" value="GUANYLATE_KINASE_1"/>
    <property type="match status" value="1"/>
</dbReference>
<dbReference type="PROSITE" id="PS50052">
    <property type="entry name" value="GUANYLATE_KINASE_2"/>
    <property type="match status" value="1"/>
</dbReference>
<proteinExistence type="inferred from homology"/>
<accession>Q7MPW9</accession>
<comment type="function">
    <text evidence="1">Essential for recycling GMP and indirectly, cGMP.</text>
</comment>
<comment type="catalytic activity">
    <reaction evidence="1">
        <text>GMP + ATP = GDP + ADP</text>
        <dbReference type="Rhea" id="RHEA:20780"/>
        <dbReference type="ChEBI" id="CHEBI:30616"/>
        <dbReference type="ChEBI" id="CHEBI:58115"/>
        <dbReference type="ChEBI" id="CHEBI:58189"/>
        <dbReference type="ChEBI" id="CHEBI:456216"/>
        <dbReference type="EC" id="2.7.4.8"/>
    </reaction>
</comment>
<comment type="subcellular location">
    <subcellularLocation>
        <location evidence="1">Cytoplasm</location>
    </subcellularLocation>
</comment>
<comment type="similarity">
    <text evidence="1">Belongs to the guanylate kinase family.</text>
</comment>
<name>KGUA_VIBVY</name>
<feature type="chain" id="PRO_0000170639" description="Guanylate kinase">
    <location>
        <begin position="1"/>
        <end position="207"/>
    </location>
</feature>
<feature type="domain" description="Guanylate kinase-like" evidence="1">
    <location>
        <begin position="4"/>
        <end position="184"/>
    </location>
</feature>
<feature type="binding site" evidence="1">
    <location>
        <begin position="11"/>
        <end position="18"/>
    </location>
    <ligand>
        <name>ATP</name>
        <dbReference type="ChEBI" id="CHEBI:30616"/>
    </ligand>
</feature>